<name>Y5046_BURM9</name>
<accession>A2S9S9</accession>
<comment type="similarity">
    <text evidence="1">Belongs to the UPF0301 (AlgH) family.</text>
</comment>
<proteinExistence type="inferred from homology"/>
<organism>
    <name type="scientific">Burkholderia mallei (strain NCTC 10229)</name>
    <dbReference type="NCBI Taxonomy" id="412022"/>
    <lineage>
        <taxon>Bacteria</taxon>
        <taxon>Pseudomonadati</taxon>
        <taxon>Pseudomonadota</taxon>
        <taxon>Betaproteobacteria</taxon>
        <taxon>Burkholderiales</taxon>
        <taxon>Burkholderiaceae</taxon>
        <taxon>Burkholderia</taxon>
        <taxon>pseudomallei group</taxon>
    </lineage>
</organism>
<feature type="chain" id="PRO_1000046646" description="UPF0301 protein BMA10229_A2746">
    <location>
        <begin position="1"/>
        <end position="192"/>
    </location>
</feature>
<sequence>MSKSSDRINLTNQFLIAMPNMADPTFSGTVVYLCDHSERGALGLVINRPTDIDLESLFNRIDLKLEIEPLLHIPVYFGGPVQTERGFVLHEPVEGSAYNSSMTVEGGLEMTTSKDVLEAVATGTGPKRFLLTLGHAGWGAGQLEEEISKNGWLTVAADPRIVFDTPAEERFEAALGLLGVSSSMLSGEAGHA</sequence>
<dbReference type="EMBL" id="CP000546">
    <property type="protein sequence ID" value="ABN01709.1"/>
    <property type="molecule type" value="Genomic_DNA"/>
</dbReference>
<dbReference type="RefSeq" id="WP_004185441.1">
    <property type="nucleotide sequence ID" value="NC_008836.1"/>
</dbReference>
<dbReference type="SMR" id="A2S9S9"/>
<dbReference type="KEGG" id="bml:BMA10229_A2746"/>
<dbReference type="HOGENOM" id="CLU_057596_1_0_4"/>
<dbReference type="Proteomes" id="UP000002283">
    <property type="component" value="Chromosome I"/>
</dbReference>
<dbReference type="GO" id="GO:0005829">
    <property type="term" value="C:cytosol"/>
    <property type="evidence" value="ECO:0007669"/>
    <property type="project" value="TreeGrafter"/>
</dbReference>
<dbReference type="Gene3D" id="3.40.1740.10">
    <property type="entry name" value="VC0467-like"/>
    <property type="match status" value="1"/>
</dbReference>
<dbReference type="HAMAP" id="MF_00758">
    <property type="entry name" value="UPF0301"/>
    <property type="match status" value="1"/>
</dbReference>
<dbReference type="InterPro" id="IPR003774">
    <property type="entry name" value="AlgH-like"/>
</dbReference>
<dbReference type="NCBIfam" id="NF001266">
    <property type="entry name" value="PRK00228.1-1"/>
    <property type="match status" value="1"/>
</dbReference>
<dbReference type="NCBIfam" id="NF001267">
    <property type="entry name" value="PRK00228.1-2"/>
    <property type="match status" value="1"/>
</dbReference>
<dbReference type="PANTHER" id="PTHR30327">
    <property type="entry name" value="UNCHARACTERIZED PROTEIN YQGE"/>
    <property type="match status" value="1"/>
</dbReference>
<dbReference type="PANTHER" id="PTHR30327:SF1">
    <property type="entry name" value="UPF0301 PROTEIN YQGE"/>
    <property type="match status" value="1"/>
</dbReference>
<dbReference type="Pfam" id="PF02622">
    <property type="entry name" value="DUF179"/>
    <property type="match status" value="1"/>
</dbReference>
<dbReference type="SUPFAM" id="SSF143456">
    <property type="entry name" value="VC0467-like"/>
    <property type="match status" value="1"/>
</dbReference>
<gene>
    <name type="ordered locus">BMA10229_A2746</name>
</gene>
<reference key="1">
    <citation type="journal article" date="2010" name="Genome Biol. Evol.">
        <title>Continuing evolution of Burkholderia mallei through genome reduction and large-scale rearrangements.</title>
        <authorList>
            <person name="Losada L."/>
            <person name="Ronning C.M."/>
            <person name="DeShazer D."/>
            <person name="Woods D."/>
            <person name="Fedorova N."/>
            <person name="Kim H.S."/>
            <person name="Shabalina S.A."/>
            <person name="Pearson T.R."/>
            <person name="Brinkac L."/>
            <person name="Tan P."/>
            <person name="Nandi T."/>
            <person name="Crabtree J."/>
            <person name="Badger J."/>
            <person name="Beckstrom-Sternberg S."/>
            <person name="Saqib M."/>
            <person name="Schutzer S.E."/>
            <person name="Keim P."/>
            <person name="Nierman W.C."/>
        </authorList>
    </citation>
    <scope>NUCLEOTIDE SEQUENCE [LARGE SCALE GENOMIC DNA]</scope>
    <source>
        <strain>NCTC 10229</strain>
    </source>
</reference>
<evidence type="ECO:0000255" key="1">
    <source>
        <dbReference type="HAMAP-Rule" id="MF_00758"/>
    </source>
</evidence>
<protein>
    <recommendedName>
        <fullName evidence="1">UPF0301 protein BMA10229_A2746</fullName>
    </recommendedName>
</protein>